<dbReference type="EMBL" id="AC022464">
    <property type="protein sequence ID" value="AAF79548.1"/>
    <property type="status" value="ALT_SEQ"/>
    <property type="molecule type" value="Genomic_DNA"/>
</dbReference>
<dbReference type="EMBL" id="CP002684">
    <property type="protein sequence ID" value="AEE28138.1"/>
    <property type="molecule type" value="Genomic_DNA"/>
</dbReference>
<dbReference type="EMBL" id="AB493440">
    <property type="protein sequence ID" value="BAH30278.1"/>
    <property type="molecule type" value="mRNA"/>
</dbReference>
<dbReference type="EMBL" id="BX839686">
    <property type="status" value="NOT_ANNOTATED_CDS"/>
    <property type="molecule type" value="mRNA"/>
</dbReference>
<dbReference type="PIR" id="T51232">
    <property type="entry name" value="T51232"/>
</dbReference>
<dbReference type="RefSeq" id="NP_172232.1">
    <molecule id="Q3EDH0-1"/>
    <property type="nucleotide sequence ID" value="NM_100626.2"/>
</dbReference>
<dbReference type="SMR" id="Q3EDH0"/>
<dbReference type="FunCoup" id="Q3EDH0">
    <property type="interactions" value="7"/>
</dbReference>
<dbReference type="STRING" id="3702.Q3EDH0"/>
<dbReference type="iPTMnet" id="Q3EDH0"/>
<dbReference type="PaxDb" id="3702-AT1G07520.1"/>
<dbReference type="ProteomicsDB" id="232695">
    <molecule id="Q3EDH0-1"/>
</dbReference>
<dbReference type="EnsemblPlants" id="AT1G07520.1">
    <molecule id="Q3EDH0-1"/>
    <property type="protein sequence ID" value="AT1G07520.1"/>
    <property type="gene ID" value="AT1G07520"/>
</dbReference>
<dbReference type="GeneID" id="837266"/>
<dbReference type="Gramene" id="AT1G07520.1">
    <molecule id="Q3EDH0-1"/>
    <property type="protein sequence ID" value="AT1G07520.1"/>
    <property type="gene ID" value="AT1G07520"/>
</dbReference>
<dbReference type="KEGG" id="ath:AT1G07520"/>
<dbReference type="Araport" id="AT1G07520"/>
<dbReference type="TAIR" id="AT1G07520"/>
<dbReference type="eggNOG" id="ENOG502QSQ6">
    <property type="taxonomic scope" value="Eukaryota"/>
</dbReference>
<dbReference type="HOGENOM" id="CLU_011924_2_1_1"/>
<dbReference type="InParanoid" id="Q3EDH0"/>
<dbReference type="OrthoDB" id="1060659at2759"/>
<dbReference type="PRO" id="PR:Q3EDH0"/>
<dbReference type="Proteomes" id="UP000006548">
    <property type="component" value="Chromosome 1"/>
</dbReference>
<dbReference type="ExpressionAtlas" id="Q3EDH0">
    <property type="expression patterns" value="baseline and differential"/>
</dbReference>
<dbReference type="GO" id="GO:0005634">
    <property type="term" value="C:nucleus"/>
    <property type="evidence" value="ECO:0007669"/>
    <property type="project" value="UniProtKB-SubCell"/>
</dbReference>
<dbReference type="GO" id="GO:0000976">
    <property type="term" value="F:transcription cis-regulatory region binding"/>
    <property type="evidence" value="ECO:0000353"/>
    <property type="project" value="TAIR"/>
</dbReference>
<dbReference type="InterPro" id="IPR005202">
    <property type="entry name" value="TF_GRAS"/>
</dbReference>
<dbReference type="PANTHER" id="PTHR31636">
    <property type="entry name" value="OSJNBA0084A10.13 PROTEIN-RELATED"/>
    <property type="match status" value="1"/>
</dbReference>
<dbReference type="Pfam" id="PF03514">
    <property type="entry name" value="GRAS"/>
    <property type="match status" value="1"/>
</dbReference>
<dbReference type="PROSITE" id="PS50985">
    <property type="entry name" value="GRAS"/>
    <property type="match status" value="1"/>
</dbReference>
<feature type="chain" id="PRO_0000350868" description="Scarecrow-like protein 31">
    <location>
        <begin position="1"/>
        <end position="695"/>
    </location>
</feature>
<feature type="domain" description="GRAS" evidence="3">
    <location>
        <begin position="306"/>
        <end position="693"/>
    </location>
</feature>
<feature type="region of interest" description="Disordered" evidence="4">
    <location>
        <begin position="105"/>
        <end position="136"/>
    </location>
</feature>
<feature type="region of interest" description="Disordered" evidence="4">
    <location>
        <begin position="234"/>
        <end position="260"/>
    </location>
</feature>
<feature type="region of interest" description="Leucine repeat I (LRI)" evidence="3">
    <location>
        <begin position="313"/>
        <end position="377"/>
    </location>
</feature>
<feature type="region of interest" description="VHIID" evidence="3">
    <location>
        <begin position="396"/>
        <end position="461"/>
    </location>
</feature>
<feature type="region of interest" description="Leucine repeat II (LRII)" evidence="3">
    <location>
        <begin position="477"/>
        <end position="509"/>
    </location>
</feature>
<feature type="region of interest" description="PFYRE" evidence="3">
    <location>
        <begin position="519"/>
        <end position="614"/>
    </location>
</feature>
<feature type="region of interest" description="SAW" evidence="3">
    <location>
        <begin position="617"/>
        <end position="693"/>
    </location>
</feature>
<feature type="coiled-coil region" evidence="2">
    <location>
        <begin position="233"/>
        <end position="266"/>
    </location>
</feature>
<feature type="short sequence motif" description="VHIID" evidence="3">
    <location>
        <begin position="427"/>
        <end position="431"/>
    </location>
</feature>
<feature type="compositionally biased region" description="Low complexity" evidence="4">
    <location>
        <begin position="113"/>
        <end position="136"/>
    </location>
</feature>
<feature type="splice variant" id="VSP_042109" description="In isoform 2." evidence="6">
    <location>
        <begin position="129"/>
        <end position="161"/>
    </location>
</feature>
<feature type="sequence conflict" description="In Ref. 4; BX839686." evidence="7" ref="4">
    <original>K</original>
    <variation>E</variation>
    <location>
        <position position="150"/>
    </location>
</feature>
<gene>
    <name type="primary">SCL31</name>
    <name type="ordered locus">At1g07520</name>
    <name type="ORF">F22G5.41</name>
</gene>
<organism>
    <name type="scientific">Arabidopsis thaliana</name>
    <name type="common">Mouse-ear cress</name>
    <dbReference type="NCBI Taxonomy" id="3702"/>
    <lineage>
        <taxon>Eukaryota</taxon>
        <taxon>Viridiplantae</taxon>
        <taxon>Streptophyta</taxon>
        <taxon>Embryophyta</taxon>
        <taxon>Tracheophyta</taxon>
        <taxon>Spermatophyta</taxon>
        <taxon>Magnoliopsida</taxon>
        <taxon>eudicotyledons</taxon>
        <taxon>Gunneridae</taxon>
        <taxon>Pentapetalae</taxon>
        <taxon>rosids</taxon>
        <taxon>malvids</taxon>
        <taxon>Brassicales</taxon>
        <taxon>Brassicaceae</taxon>
        <taxon>Camelineae</taxon>
        <taxon>Arabidopsis</taxon>
    </lineage>
</organism>
<protein>
    <recommendedName>
        <fullName>Scarecrow-like protein 31</fullName>
        <shortName>AtSCL31</shortName>
    </recommendedName>
    <alternativeName>
        <fullName>GRAS family protein 1</fullName>
        <shortName>AtGRAS-1</shortName>
    </alternativeName>
</protein>
<name>SCL31_ARATH</name>
<comment type="function">
    <text evidence="1">Probable transcription factor involved in plant development.</text>
</comment>
<comment type="subcellular location">
    <subcellularLocation>
        <location evidence="7">Nucleus</location>
    </subcellularLocation>
</comment>
<comment type="alternative products">
    <event type="alternative splicing"/>
    <isoform>
        <id>Q3EDH0-1</id>
        <name>1</name>
        <sequence type="displayed"/>
    </isoform>
    <isoform>
        <id>Q3EDH0-2</id>
        <name>2</name>
        <sequence type="described" ref="VSP_042109"/>
    </isoform>
</comment>
<comment type="tissue specificity">
    <text evidence="5">Expressed in seedlings, roots, cotyledons, leaves and sepals.</text>
</comment>
<comment type="similarity">
    <text evidence="7">Belongs to the GRAS family.</text>
</comment>
<comment type="sequence caution" evidence="7">
    <conflict type="erroneous gene model prediction">
        <sequence resource="EMBL-CDS" id="AAF79548"/>
    </conflict>
    <text>The predicted gene has been split into 2 genes: At1g07520 and At1g07530.</text>
</comment>
<evidence type="ECO:0000250" key="1"/>
<evidence type="ECO:0000255" key="2"/>
<evidence type="ECO:0000255" key="3">
    <source>
        <dbReference type="PROSITE-ProRule" id="PRU01191"/>
    </source>
</evidence>
<evidence type="ECO:0000256" key="4">
    <source>
        <dbReference type="SAM" id="MobiDB-lite"/>
    </source>
</evidence>
<evidence type="ECO:0000269" key="5">
    <source>
    </source>
</evidence>
<evidence type="ECO:0000303" key="6">
    <source ref="3"/>
</evidence>
<evidence type="ECO:0000305" key="7"/>
<sequence length="695" mass="79251">MESNYSGVVNGYDVSFLPTSIPDLGFGVPSSSDFDLRMDQYYHQPSIWVPDQDHHFSPPADEIDSENTLLKYVNQLLMEESLAEKQSIFYDSLALRQTEEMLQQVISDSQTQSSIPNNSITTSSSSNSGDYSNSSNSSVRIENEVLFDNKHLGDSGVVSFPGSNMLRGGEQFGQPANEILVRSMFSDAESVLQFKRGLEEASKFLPNTDQWIFNLEPEMERVVPVKVEEGWSAISKTRKNHHEREEEEDDLEEARRRSKQFAVNEEDGKLTEMFDKVLLLDGECDPQIIEDGENGSSKALVKKGRAKKKSRAVDFRTLLTLCAQSVSAGDKITADDLLRQIRKQCSPVGDASQRLAHFFANALEARLEGSTGTMIQSYYDSISSKKRTAAQILKSYSVFLSASPFMTLIYFFSNKMILDAAKDASVLHIVDFGILYGFQWPMFIQHLSKSNPGLRKLRITGIEIPQHGLRPTERIQDTGRRLTEYCKRFGVPFEYNAIASKNWETIKMEEFKIRPNEVLAVNAVLRFKNLRDVIPGEEDCPRDGFLKLIRDMNPNVFLSSTVNGSFNAPFFTTRFKEALFHYSALFDLFGATLSKENPERIHFEGEFYGREVMNVIACEGVDRVERPETYKQWQVRMIRAGFKQKPVEAELVQLFREKMKKWGYHKDFVLDEDSNWFLQGWKGRILFSSSCWVPS</sequence>
<proteinExistence type="evidence at transcript level"/>
<reference key="1">
    <citation type="journal article" date="2000" name="Nature">
        <title>Sequence and analysis of chromosome 1 of the plant Arabidopsis thaliana.</title>
        <authorList>
            <person name="Theologis A."/>
            <person name="Ecker J.R."/>
            <person name="Palm C.J."/>
            <person name="Federspiel N.A."/>
            <person name="Kaul S."/>
            <person name="White O."/>
            <person name="Alonso J."/>
            <person name="Altafi H."/>
            <person name="Araujo R."/>
            <person name="Bowman C.L."/>
            <person name="Brooks S.Y."/>
            <person name="Buehler E."/>
            <person name="Chan A."/>
            <person name="Chao Q."/>
            <person name="Chen H."/>
            <person name="Cheuk R.F."/>
            <person name="Chin C.W."/>
            <person name="Chung M.K."/>
            <person name="Conn L."/>
            <person name="Conway A.B."/>
            <person name="Conway A.R."/>
            <person name="Creasy T.H."/>
            <person name="Dewar K."/>
            <person name="Dunn P."/>
            <person name="Etgu P."/>
            <person name="Feldblyum T.V."/>
            <person name="Feng J.-D."/>
            <person name="Fong B."/>
            <person name="Fujii C.Y."/>
            <person name="Gill J.E."/>
            <person name="Goldsmith A.D."/>
            <person name="Haas B."/>
            <person name="Hansen N.F."/>
            <person name="Hughes B."/>
            <person name="Huizar L."/>
            <person name="Hunter J.L."/>
            <person name="Jenkins J."/>
            <person name="Johnson-Hopson C."/>
            <person name="Khan S."/>
            <person name="Khaykin E."/>
            <person name="Kim C.J."/>
            <person name="Koo H.L."/>
            <person name="Kremenetskaia I."/>
            <person name="Kurtz D.B."/>
            <person name="Kwan A."/>
            <person name="Lam B."/>
            <person name="Langin-Hooper S."/>
            <person name="Lee A."/>
            <person name="Lee J.M."/>
            <person name="Lenz C.A."/>
            <person name="Li J.H."/>
            <person name="Li Y.-P."/>
            <person name="Lin X."/>
            <person name="Liu S.X."/>
            <person name="Liu Z.A."/>
            <person name="Luros J.S."/>
            <person name="Maiti R."/>
            <person name="Marziali A."/>
            <person name="Militscher J."/>
            <person name="Miranda M."/>
            <person name="Nguyen M."/>
            <person name="Nierman W.C."/>
            <person name="Osborne B.I."/>
            <person name="Pai G."/>
            <person name="Peterson J."/>
            <person name="Pham P.K."/>
            <person name="Rizzo M."/>
            <person name="Rooney T."/>
            <person name="Rowley D."/>
            <person name="Sakano H."/>
            <person name="Salzberg S.L."/>
            <person name="Schwartz J.R."/>
            <person name="Shinn P."/>
            <person name="Southwick A.M."/>
            <person name="Sun H."/>
            <person name="Tallon L.J."/>
            <person name="Tambunga G."/>
            <person name="Toriumi M.J."/>
            <person name="Town C.D."/>
            <person name="Utterback T."/>
            <person name="Van Aken S."/>
            <person name="Vaysberg M."/>
            <person name="Vysotskaia V.S."/>
            <person name="Walker M."/>
            <person name="Wu D."/>
            <person name="Yu G."/>
            <person name="Fraser C.M."/>
            <person name="Venter J.C."/>
            <person name="Davis R.W."/>
        </authorList>
    </citation>
    <scope>NUCLEOTIDE SEQUENCE [LARGE SCALE GENOMIC DNA]</scope>
    <source>
        <strain>cv. Columbia</strain>
    </source>
</reference>
<reference key="2">
    <citation type="journal article" date="2017" name="Plant J.">
        <title>Araport11: a complete reannotation of the Arabidopsis thaliana reference genome.</title>
        <authorList>
            <person name="Cheng C.Y."/>
            <person name="Krishnakumar V."/>
            <person name="Chan A.P."/>
            <person name="Thibaud-Nissen F."/>
            <person name="Schobel S."/>
            <person name="Town C.D."/>
        </authorList>
    </citation>
    <scope>GENOME REANNOTATION</scope>
    <source>
        <strain>cv. Columbia</strain>
    </source>
</reference>
<reference key="3">
    <citation type="submission" date="2009-03" db="EMBL/GenBank/DDBJ databases">
        <title>ORF cloning and analysis of Arabidopsis transcription factor genes.</title>
        <authorList>
            <person name="Fujita M."/>
            <person name="Mizukado S."/>
            <person name="Seki M."/>
            <person name="Shinozaki K."/>
            <person name="Mitsuda N."/>
            <person name="Takiguchi Y."/>
            <person name="Takagi M."/>
        </authorList>
    </citation>
    <scope>NUCLEOTIDE SEQUENCE [LARGE SCALE MRNA] (ISOFORM 2)</scope>
</reference>
<reference key="4">
    <citation type="journal article" date="2004" name="Genome Res.">
        <title>Whole genome sequence comparisons and 'full-length' cDNA sequences: a combined approach to evaluate and improve Arabidopsis genome annotation.</title>
        <authorList>
            <person name="Castelli V."/>
            <person name="Aury J.-M."/>
            <person name="Jaillon O."/>
            <person name="Wincker P."/>
            <person name="Clepet C."/>
            <person name="Menard M."/>
            <person name="Cruaud C."/>
            <person name="Quetier F."/>
            <person name="Scarpelli C."/>
            <person name="Schaechter V."/>
            <person name="Temple G."/>
            <person name="Caboche M."/>
            <person name="Weissenbach J."/>
            <person name="Salanoubat M."/>
        </authorList>
    </citation>
    <scope>NUCLEOTIDE SEQUENCE [LARGE SCALE MRNA] OF 98-301 (ISOFORM 1)</scope>
    <source>
        <strain>cv. Columbia</strain>
    </source>
</reference>
<reference key="5">
    <citation type="journal article" date="2004" name="Plant Mol. Biol.">
        <title>Genome-wide analysis of the GRAS gene family in rice and Arabidopsis.</title>
        <authorList>
            <person name="Tian C."/>
            <person name="Wan P."/>
            <person name="Sun S."/>
            <person name="Li J."/>
            <person name="Chen M."/>
        </authorList>
    </citation>
    <scope>GENE FAMILY</scope>
</reference>
<reference key="6">
    <citation type="journal article" date="2008" name="Plant Mol. Biol.">
        <title>Large-scale analysis of the GRAS gene family in Arabidopsis thaliana.</title>
        <authorList>
            <person name="Lee M.-H."/>
            <person name="Kim B."/>
            <person name="Song S.-K."/>
            <person name="Heo J.-O."/>
            <person name="Yu N.-I."/>
            <person name="Lee S.A."/>
            <person name="Kim M."/>
            <person name="Kim D.G."/>
            <person name="Sohn S.O."/>
            <person name="Lim C.E."/>
            <person name="Chang K.S."/>
            <person name="Lee M.M."/>
            <person name="Lim J."/>
        </authorList>
    </citation>
    <scope>GENE FAMILY</scope>
    <scope>TISSUE SPECIFICITY</scope>
</reference>
<accession>Q3EDH0</accession>
<accession>C0SUT7</accession>
<accession>F4HQP5</accession>
<accession>Q9LNX6</accession>
<keyword id="KW-0025">Alternative splicing</keyword>
<keyword id="KW-0175">Coiled coil</keyword>
<keyword id="KW-0539">Nucleus</keyword>
<keyword id="KW-1185">Reference proteome</keyword>
<keyword id="KW-0804">Transcription</keyword>
<keyword id="KW-0805">Transcription regulation</keyword>